<name>ILVC_ROSDO</name>
<reference key="1">
    <citation type="journal article" date="2007" name="J. Bacteriol.">
        <title>The complete genome sequence of Roseobacter denitrificans reveals a mixotrophic rather than photosynthetic metabolism.</title>
        <authorList>
            <person name="Swingley W.D."/>
            <person name="Sadekar S."/>
            <person name="Mastrian S.D."/>
            <person name="Matthies H.J."/>
            <person name="Hao J."/>
            <person name="Ramos H."/>
            <person name="Acharya C.R."/>
            <person name="Conrad A.L."/>
            <person name="Taylor H.L."/>
            <person name="Dejesa L.C."/>
            <person name="Shah M.K."/>
            <person name="O'Huallachain M.E."/>
            <person name="Lince M.T."/>
            <person name="Blankenship R.E."/>
            <person name="Beatty J.T."/>
            <person name="Touchman J.W."/>
        </authorList>
    </citation>
    <scope>NUCLEOTIDE SEQUENCE [LARGE SCALE GENOMIC DNA]</scope>
    <source>
        <strain>ATCC 33942 / OCh 114</strain>
    </source>
</reference>
<gene>
    <name evidence="1" type="primary">ilvC</name>
    <name type="ordered locus">RD1_1954</name>
</gene>
<sequence>MRVYYDRDCDVNLIKDMKVAILGYGSQGHAHALNLRDSGAKNLAVALREGSASAAKAEGEGLQVMGIAEAAAWADLIMFTMPDELQAETYKKYVHDNIREGAAIAFAHGLNVHFGLIEPKEGIDVIMMAPKGPGHTVRGEYTKGGGVPCLVAVDKDASGRALEIGLSYCSAIGGGRSGIIETNFREECETDLFGEQAVLCGGLVELIRMGFETLVEAGYAPEMAYFECLHEVKLIVDLIYEGGIANMNYSISNTAEYGEYVSGPRVLPYDETKARMKAILTDIQNGKFVRDFMQENAVGQPHFKATRRINDEHQIEATGETLRGMMPWISAGKMVDKSKN</sequence>
<organism>
    <name type="scientific">Roseobacter denitrificans (strain ATCC 33942 / OCh 114)</name>
    <name type="common">Erythrobacter sp. (strain OCh 114)</name>
    <name type="synonym">Roseobacter denitrificans</name>
    <dbReference type="NCBI Taxonomy" id="375451"/>
    <lineage>
        <taxon>Bacteria</taxon>
        <taxon>Pseudomonadati</taxon>
        <taxon>Pseudomonadota</taxon>
        <taxon>Alphaproteobacteria</taxon>
        <taxon>Rhodobacterales</taxon>
        <taxon>Roseobacteraceae</taxon>
        <taxon>Roseobacter</taxon>
    </lineage>
</organism>
<dbReference type="EC" id="1.1.1.86" evidence="1"/>
<dbReference type="EMBL" id="CP000362">
    <property type="protein sequence ID" value="ABG31562.1"/>
    <property type="molecule type" value="Genomic_DNA"/>
</dbReference>
<dbReference type="RefSeq" id="WP_011568179.1">
    <property type="nucleotide sequence ID" value="NC_008209.1"/>
</dbReference>
<dbReference type="SMR" id="Q168N1"/>
<dbReference type="STRING" id="375451.RD1_1954"/>
<dbReference type="KEGG" id="rde:RD1_1954"/>
<dbReference type="eggNOG" id="COG0059">
    <property type="taxonomic scope" value="Bacteria"/>
</dbReference>
<dbReference type="HOGENOM" id="CLU_033821_0_1_5"/>
<dbReference type="OrthoDB" id="9804088at2"/>
<dbReference type="UniPathway" id="UPA00047">
    <property type="reaction ID" value="UER00056"/>
</dbReference>
<dbReference type="UniPathway" id="UPA00049">
    <property type="reaction ID" value="UER00060"/>
</dbReference>
<dbReference type="Proteomes" id="UP000007029">
    <property type="component" value="Chromosome"/>
</dbReference>
<dbReference type="GO" id="GO:0005829">
    <property type="term" value="C:cytosol"/>
    <property type="evidence" value="ECO:0007669"/>
    <property type="project" value="TreeGrafter"/>
</dbReference>
<dbReference type="GO" id="GO:0004455">
    <property type="term" value="F:ketol-acid reductoisomerase activity"/>
    <property type="evidence" value="ECO:0007669"/>
    <property type="project" value="UniProtKB-UniRule"/>
</dbReference>
<dbReference type="GO" id="GO:0000287">
    <property type="term" value="F:magnesium ion binding"/>
    <property type="evidence" value="ECO:0007669"/>
    <property type="project" value="UniProtKB-UniRule"/>
</dbReference>
<dbReference type="GO" id="GO:0050661">
    <property type="term" value="F:NADP binding"/>
    <property type="evidence" value="ECO:0007669"/>
    <property type="project" value="InterPro"/>
</dbReference>
<dbReference type="GO" id="GO:0009097">
    <property type="term" value="P:isoleucine biosynthetic process"/>
    <property type="evidence" value="ECO:0007669"/>
    <property type="project" value="UniProtKB-UniRule"/>
</dbReference>
<dbReference type="GO" id="GO:0009099">
    <property type="term" value="P:L-valine biosynthetic process"/>
    <property type="evidence" value="ECO:0007669"/>
    <property type="project" value="UniProtKB-UniRule"/>
</dbReference>
<dbReference type="FunFam" id="3.40.50.720:FF:000023">
    <property type="entry name" value="Ketol-acid reductoisomerase (NADP(+))"/>
    <property type="match status" value="1"/>
</dbReference>
<dbReference type="Gene3D" id="6.10.240.10">
    <property type="match status" value="1"/>
</dbReference>
<dbReference type="Gene3D" id="3.40.50.720">
    <property type="entry name" value="NAD(P)-binding Rossmann-like Domain"/>
    <property type="match status" value="1"/>
</dbReference>
<dbReference type="HAMAP" id="MF_00435">
    <property type="entry name" value="IlvC"/>
    <property type="match status" value="1"/>
</dbReference>
<dbReference type="InterPro" id="IPR008927">
    <property type="entry name" value="6-PGluconate_DH-like_C_sf"/>
</dbReference>
<dbReference type="InterPro" id="IPR013023">
    <property type="entry name" value="KARI"/>
</dbReference>
<dbReference type="InterPro" id="IPR000506">
    <property type="entry name" value="KARI_C"/>
</dbReference>
<dbReference type="InterPro" id="IPR013116">
    <property type="entry name" value="KARI_N"/>
</dbReference>
<dbReference type="InterPro" id="IPR014359">
    <property type="entry name" value="KARI_prok"/>
</dbReference>
<dbReference type="InterPro" id="IPR036291">
    <property type="entry name" value="NAD(P)-bd_dom_sf"/>
</dbReference>
<dbReference type="NCBIfam" id="TIGR00465">
    <property type="entry name" value="ilvC"/>
    <property type="match status" value="1"/>
</dbReference>
<dbReference type="NCBIfam" id="NF004017">
    <property type="entry name" value="PRK05479.1"/>
    <property type="match status" value="1"/>
</dbReference>
<dbReference type="NCBIfam" id="NF009940">
    <property type="entry name" value="PRK13403.1"/>
    <property type="match status" value="1"/>
</dbReference>
<dbReference type="PANTHER" id="PTHR21371">
    <property type="entry name" value="KETOL-ACID REDUCTOISOMERASE, MITOCHONDRIAL"/>
    <property type="match status" value="1"/>
</dbReference>
<dbReference type="PANTHER" id="PTHR21371:SF1">
    <property type="entry name" value="KETOL-ACID REDUCTOISOMERASE, MITOCHONDRIAL"/>
    <property type="match status" value="1"/>
</dbReference>
<dbReference type="Pfam" id="PF01450">
    <property type="entry name" value="KARI_C"/>
    <property type="match status" value="1"/>
</dbReference>
<dbReference type="Pfam" id="PF07991">
    <property type="entry name" value="KARI_N"/>
    <property type="match status" value="1"/>
</dbReference>
<dbReference type="PIRSF" id="PIRSF000116">
    <property type="entry name" value="IlvC_gammaproteo"/>
    <property type="match status" value="1"/>
</dbReference>
<dbReference type="SUPFAM" id="SSF48179">
    <property type="entry name" value="6-phosphogluconate dehydrogenase C-terminal domain-like"/>
    <property type="match status" value="1"/>
</dbReference>
<dbReference type="SUPFAM" id="SSF51735">
    <property type="entry name" value="NAD(P)-binding Rossmann-fold domains"/>
    <property type="match status" value="1"/>
</dbReference>
<dbReference type="PROSITE" id="PS51851">
    <property type="entry name" value="KARI_C"/>
    <property type="match status" value="1"/>
</dbReference>
<dbReference type="PROSITE" id="PS51850">
    <property type="entry name" value="KARI_N"/>
    <property type="match status" value="1"/>
</dbReference>
<evidence type="ECO:0000255" key="1">
    <source>
        <dbReference type="HAMAP-Rule" id="MF_00435"/>
    </source>
</evidence>
<evidence type="ECO:0000255" key="2">
    <source>
        <dbReference type="PROSITE-ProRule" id="PRU01197"/>
    </source>
</evidence>
<evidence type="ECO:0000255" key="3">
    <source>
        <dbReference type="PROSITE-ProRule" id="PRU01198"/>
    </source>
</evidence>
<keyword id="KW-0028">Amino-acid biosynthesis</keyword>
<keyword id="KW-0100">Branched-chain amino acid biosynthesis</keyword>
<keyword id="KW-0460">Magnesium</keyword>
<keyword id="KW-0479">Metal-binding</keyword>
<keyword id="KW-0521">NADP</keyword>
<keyword id="KW-0560">Oxidoreductase</keyword>
<keyword id="KW-1185">Reference proteome</keyword>
<protein>
    <recommendedName>
        <fullName evidence="1">Ketol-acid reductoisomerase (NADP(+))</fullName>
        <shortName evidence="1">KARI</shortName>
        <ecNumber evidence="1">1.1.1.86</ecNumber>
    </recommendedName>
    <alternativeName>
        <fullName evidence="1">Acetohydroxy-acid isomeroreductase</fullName>
        <shortName evidence="1">AHIR</shortName>
    </alternativeName>
    <alternativeName>
        <fullName evidence="1">Alpha-keto-beta-hydroxylacyl reductoisomerase</fullName>
    </alternativeName>
    <alternativeName>
        <fullName evidence="1">Ketol-acid reductoisomerase type 1</fullName>
    </alternativeName>
    <alternativeName>
        <fullName evidence="1">Ketol-acid reductoisomerase type I</fullName>
    </alternativeName>
</protein>
<comment type="function">
    <text evidence="1">Involved in the biosynthesis of branched-chain amino acids (BCAA). Catalyzes an alkyl-migration followed by a ketol-acid reduction of (S)-2-acetolactate (S2AL) to yield (R)-2,3-dihydroxy-isovalerate. In the isomerase reaction, S2AL is rearranged via a Mg-dependent methyl migration to produce 3-hydroxy-3-methyl-2-ketobutyrate (HMKB). In the reductase reaction, this 2-ketoacid undergoes a metal-dependent reduction by NADPH to yield (R)-2,3-dihydroxy-isovalerate.</text>
</comment>
<comment type="catalytic activity">
    <reaction evidence="1">
        <text>(2R)-2,3-dihydroxy-3-methylbutanoate + NADP(+) = (2S)-2-acetolactate + NADPH + H(+)</text>
        <dbReference type="Rhea" id="RHEA:22068"/>
        <dbReference type="ChEBI" id="CHEBI:15378"/>
        <dbReference type="ChEBI" id="CHEBI:49072"/>
        <dbReference type="ChEBI" id="CHEBI:57783"/>
        <dbReference type="ChEBI" id="CHEBI:58349"/>
        <dbReference type="ChEBI" id="CHEBI:58476"/>
        <dbReference type="EC" id="1.1.1.86"/>
    </reaction>
</comment>
<comment type="catalytic activity">
    <reaction evidence="1">
        <text>(2R,3R)-2,3-dihydroxy-3-methylpentanoate + NADP(+) = (S)-2-ethyl-2-hydroxy-3-oxobutanoate + NADPH + H(+)</text>
        <dbReference type="Rhea" id="RHEA:13493"/>
        <dbReference type="ChEBI" id="CHEBI:15378"/>
        <dbReference type="ChEBI" id="CHEBI:49256"/>
        <dbReference type="ChEBI" id="CHEBI:49258"/>
        <dbReference type="ChEBI" id="CHEBI:57783"/>
        <dbReference type="ChEBI" id="CHEBI:58349"/>
        <dbReference type="EC" id="1.1.1.86"/>
    </reaction>
</comment>
<comment type="cofactor">
    <cofactor evidence="1">
        <name>Mg(2+)</name>
        <dbReference type="ChEBI" id="CHEBI:18420"/>
    </cofactor>
    <text evidence="1">Binds 2 magnesium ions per subunit.</text>
</comment>
<comment type="pathway">
    <text evidence="1">Amino-acid biosynthesis; L-isoleucine biosynthesis; L-isoleucine from 2-oxobutanoate: step 2/4.</text>
</comment>
<comment type="pathway">
    <text evidence="1">Amino-acid biosynthesis; L-valine biosynthesis; L-valine from pyruvate: step 2/4.</text>
</comment>
<comment type="similarity">
    <text evidence="1">Belongs to the ketol-acid reductoisomerase family.</text>
</comment>
<proteinExistence type="inferred from homology"/>
<feature type="chain" id="PRO_0000252783" description="Ketol-acid reductoisomerase (NADP(+))">
    <location>
        <begin position="1"/>
        <end position="340"/>
    </location>
</feature>
<feature type="domain" description="KARI N-terminal Rossmann" evidence="2">
    <location>
        <begin position="1"/>
        <end position="182"/>
    </location>
</feature>
<feature type="domain" description="KARI C-terminal knotted" evidence="3">
    <location>
        <begin position="183"/>
        <end position="329"/>
    </location>
</feature>
<feature type="active site" evidence="1">
    <location>
        <position position="108"/>
    </location>
</feature>
<feature type="binding site" evidence="1">
    <location>
        <begin position="24"/>
        <end position="27"/>
    </location>
    <ligand>
        <name>NADP(+)</name>
        <dbReference type="ChEBI" id="CHEBI:58349"/>
    </ligand>
</feature>
<feature type="binding site" evidence="1">
    <location>
        <position position="48"/>
    </location>
    <ligand>
        <name>NADP(+)</name>
        <dbReference type="ChEBI" id="CHEBI:58349"/>
    </ligand>
</feature>
<feature type="binding site" evidence="1">
    <location>
        <position position="51"/>
    </location>
    <ligand>
        <name>NADP(+)</name>
        <dbReference type="ChEBI" id="CHEBI:58349"/>
    </ligand>
</feature>
<feature type="binding site" evidence="1">
    <location>
        <position position="53"/>
    </location>
    <ligand>
        <name>NADP(+)</name>
        <dbReference type="ChEBI" id="CHEBI:58349"/>
    </ligand>
</feature>
<feature type="binding site" evidence="1">
    <location>
        <begin position="83"/>
        <end position="86"/>
    </location>
    <ligand>
        <name>NADP(+)</name>
        <dbReference type="ChEBI" id="CHEBI:58349"/>
    </ligand>
</feature>
<feature type="binding site" evidence="1">
    <location>
        <position position="134"/>
    </location>
    <ligand>
        <name>NADP(+)</name>
        <dbReference type="ChEBI" id="CHEBI:58349"/>
    </ligand>
</feature>
<feature type="binding site" evidence="1">
    <location>
        <position position="191"/>
    </location>
    <ligand>
        <name>Mg(2+)</name>
        <dbReference type="ChEBI" id="CHEBI:18420"/>
        <label>1</label>
    </ligand>
</feature>
<feature type="binding site" evidence="1">
    <location>
        <position position="191"/>
    </location>
    <ligand>
        <name>Mg(2+)</name>
        <dbReference type="ChEBI" id="CHEBI:18420"/>
        <label>2</label>
    </ligand>
</feature>
<feature type="binding site" evidence="1">
    <location>
        <position position="195"/>
    </location>
    <ligand>
        <name>Mg(2+)</name>
        <dbReference type="ChEBI" id="CHEBI:18420"/>
        <label>1</label>
    </ligand>
</feature>
<feature type="binding site" evidence="1">
    <location>
        <position position="227"/>
    </location>
    <ligand>
        <name>Mg(2+)</name>
        <dbReference type="ChEBI" id="CHEBI:18420"/>
        <label>2</label>
    </ligand>
</feature>
<feature type="binding site" evidence="1">
    <location>
        <position position="231"/>
    </location>
    <ligand>
        <name>Mg(2+)</name>
        <dbReference type="ChEBI" id="CHEBI:18420"/>
        <label>2</label>
    </ligand>
</feature>
<feature type="binding site" evidence="1">
    <location>
        <position position="252"/>
    </location>
    <ligand>
        <name>substrate</name>
    </ligand>
</feature>
<accession>Q168N1</accession>